<proteinExistence type="evidence at protein level"/>
<protein>
    <recommendedName>
        <fullName>Fetuin-B</fullName>
    </recommendedName>
</protein>
<organism>
    <name type="scientific">Bos taurus</name>
    <name type="common">Bovine</name>
    <dbReference type="NCBI Taxonomy" id="9913"/>
    <lineage>
        <taxon>Eukaryota</taxon>
        <taxon>Metazoa</taxon>
        <taxon>Chordata</taxon>
        <taxon>Craniata</taxon>
        <taxon>Vertebrata</taxon>
        <taxon>Euteleostomi</taxon>
        <taxon>Mammalia</taxon>
        <taxon>Eutheria</taxon>
        <taxon>Laurasiatheria</taxon>
        <taxon>Artiodactyla</taxon>
        <taxon>Ruminantia</taxon>
        <taxon>Pecora</taxon>
        <taxon>Bovidae</taxon>
        <taxon>Bovinae</taxon>
        <taxon>Bos</taxon>
    </lineage>
</organism>
<name>FETUB_BOVIN</name>
<feature type="signal peptide" evidence="3">
    <location>
        <begin position="1"/>
        <end position="18"/>
    </location>
</feature>
<feature type="chain" id="PRO_0000240346" description="Fetuin-B">
    <location>
        <begin position="19"/>
        <end position="387"/>
    </location>
</feature>
<feature type="domain" description="Cystatin fetuin-B-type 1" evidence="4">
    <location>
        <begin position="25"/>
        <end position="139"/>
    </location>
</feature>
<feature type="domain" description="Cystatin fetuin-B-type 2" evidence="4">
    <location>
        <begin position="150"/>
        <end position="258"/>
    </location>
</feature>
<feature type="region of interest" description="Disordered" evidence="5">
    <location>
        <begin position="264"/>
        <end position="306"/>
    </location>
</feature>
<feature type="region of interest" description="Disordered" evidence="5">
    <location>
        <begin position="366"/>
        <end position="387"/>
    </location>
</feature>
<feature type="compositionally biased region" description="Polar residues" evidence="5">
    <location>
        <begin position="272"/>
        <end position="299"/>
    </location>
</feature>
<feature type="modified residue" description="Phosphoserine" evidence="2">
    <location>
        <position position="320"/>
    </location>
</feature>
<feature type="glycosylation site" description="N-linked (GlcNAc...) asparagine" evidence="3">
    <location>
        <position position="37"/>
    </location>
</feature>
<feature type="glycosylation site" description="N-linked (GlcNAc...) asparagine" evidence="3">
    <location>
        <position position="137"/>
    </location>
</feature>
<feature type="glycosylation site" description="N-linked (GlcNAc...) asparagine" evidence="3">
    <location>
        <position position="271"/>
    </location>
</feature>
<feature type="glycosylation site" description="O-linked (GalNAc...) threonine" evidence="6">
    <location>
        <position position="292"/>
    </location>
</feature>
<feature type="glycosylation site" description="O-linked (GalNAc...) threonine" evidence="6">
    <location>
        <position position="295"/>
    </location>
</feature>
<feature type="disulfide bond" evidence="4">
    <location>
        <begin position="94"/>
        <end position="105"/>
    </location>
</feature>
<feature type="disulfide bond" evidence="4">
    <location>
        <begin position="118"/>
        <end position="138"/>
    </location>
</feature>
<feature type="disulfide bond" evidence="4">
    <location>
        <begin position="152"/>
        <end position="155"/>
    </location>
</feature>
<feature type="disulfide bond" evidence="4">
    <location>
        <begin position="217"/>
        <end position="225"/>
    </location>
</feature>
<feature type="disulfide bond" evidence="4">
    <location>
        <begin position="238"/>
        <end position="257"/>
    </location>
</feature>
<reference key="1">
    <citation type="journal article" date="2005" name="BMC Genomics">
        <title>Characterization of 954 bovine full-CDS cDNA sequences.</title>
        <authorList>
            <person name="Harhay G.P."/>
            <person name="Sonstegard T.S."/>
            <person name="Keele J.W."/>
            <person name="Heaton M.P."/>
            <person name="Clawson M.L."/>
            <person name="Snelling W.M."/>
            <person name="Wiedmann R.T."/>
            <person name="Van Tassell C.P."/>
            <person name="Smith T.P.L."/>
        </authorList>
    </citation>
    <scope>NUCLEOTIDE SEQUENCE [LARGE SCALE MRNA]</scope>
</reference>
<reference key="2">
    <citation type="submission" date="2005-08" db="EMBL/GenBank/DDBJ databases">
        <authorList>
            <consortium name="NIH - Mammalian Gene Collection (MGC) project"/>
        </authorList>
    </citation>
    <scope>NUCLEOTIDE SEQUENCE [LARGE SCALE MRNA]</scope>
    <source>
        <strain>Hereford</strain>
        <tissue>Fetal liver</tissue>
    </source>
</reference>
<reference key="3">
    <citation type="journal article" date="2009" name="Mol. Cell. Proteomics">
        <title>Affinity enrichment and characterization of mucin core-1 type glycopeptides from bovine serum.</title>
        <authorList>
            <person name="Darula Z."/>
            <person name="Medzihradszky K.F."/>
        </authorList>
    </citation>
    <scope>GLYCOSYLATION AT THR-292 AND THR-295</scope>
    <scope>IDENTIFICATION BY MASS SPECTROMETRY</scope>
</reference>
<accession>Q58D62</accession>
<dbReference type="EMBL" id="BT021735">
    <property type="protein sequence ID" value="AAX46582.1"/>
    <property type="molecule type" value="mRNA"/>
</dbReference>
<dbReference type="EMBL" id="BC103069">
    <property type="protein sequence ID" value="AAI03070.1"/>
    <property type="molecule type" value="mRNA"/>
</dbReference>
<dbReference type="RefSeq" id="NP_001029390.1">
    <property type="nucleotide sequence ID" value="NM_001034218.2"/>
</dbReference>
<dbReference type="SMR" id="Q58D62"/>
<dbReference type="FunCoup" id="Q58D62">
    <property type="interactions" value="89"/>
</dbReference>
<dbReference type="STRING" id="9913.ENSBTAP00000023309"/>
<dbReference type="MEROPS" id="I25.066"/>
<dbReference type="GlyConnect" id="644">
    <property type="glycosylation" value="1 N-Linked glycan (1 site), 2 O-Linked glycans (2 sites)"/>
</dbReference>
<dbReference type="GlyCosmos" id="Q58D62">
    <property type="glycosylation" value="5 sites, 3 glycans"/>
</dbReference>
<dbReference type="GlyGen" id="Q58D62">
    <property type="glycosylation" value="5 sites, 2 N-linked glycans (1 site), 1 O-linked glycan (1 site)"/>
</dbReference>
<dbReference type="iPTMnet" id="Q58D62"/>
<dbReference type="PaxDb" id="9913-ENSBTAP00000023309"/>
<dbReference type="PeptideAtlas" id="Q58D62"/>
<dbReference type="Ensembl" id="ENSBTAT00000023309.4">
    <property type="protein sequence ID" value="ENSBTAP00000023309.2"/>
    <property type="gene ID" value="ENSBTAG00000017531.6"/>
</dbReference>
<dbReference type="GeneID" id="504615"/>
<dbReference type="KEGG" id="bta:504615"/>
<dbReference type="CTD" id="26998"/>
<dbReference type="VEuPathDB" id="HostDB:ENSBTAG00000017531"/>
<dbReference type="VGNC" id="VGNC:28955">
    <property type="gene designation" value="FETUB"/>
</dbReference>
<dbReference type="eggNOG" id="ENOG502S28K">
    <property type="taxonomic scope" value="Eukaryota"/>
</dbReference>
<dbReference type="GeneTree" id="ENSGT00950000182930"/>
<dbReference type="HOGENOM" id="CLU_044085_1_0_1"/>
<dbReference type="InParanoid" id="Q58D62"/>
<dbReference type="OMA" id="NCQFAHR"/>
<dbReference type="OrthoDB" id="9941887at2759"/>
<dbReference type="TreeFam" id="TF333729"/>
<dbReference type="Proteomes" id="UP000009136">
    <property type="component" value="Chromosome 1"/>
</dbReference>
<dbReference type="Bgee" id="ENSBTAG00000017531">
    <property type="expression patterns" value="Expressed in liver and 23 other cell types or tissues"/>
</dbReference>
<dbReference type="GO" id="GO:0005576">
    <property type="term" value="C:extracellular region"/>
    <property type="evidence" value="ECO:0000318"/>
    <property type="project" value="GO_Central"/>
</dbReference>
<dbReference type="GO" id="GO:0005615">
    <property type="term" value="C:extracellular space"/>
    <property type="evidence" value="ECO:0007669"/>
    <property type="project" value="InterPro"/>
</dbReference>
<dbReference type="GO" id="GO:0004869">
    <property type="term" value="F:cysteine-type endopeptidase inhibitor activity"/>
    <property type="evidence" value="ECO:0007669"/>
    <property type="project" value="InterPro"/>
</dbReference>
<dbReference type="GO" id="GO:0008191">
    <property type="term" value="F:metalloendopeptidase inhibitor activity"/>
    <property type="evidence" value="ECO:0000250"/>
    <property type="project" value="UniProtKB"/>
</dbReference>
<dbReference type="GO" id="GO:0007339">
    <property type="term" value="P:binding of sperm to zona pellucida"/>
    <property type="evidence" value="ECO:0000250"/>
    <property type="project" value="UniProtKB"/>
</dbReference>
<dbReference type="GO" id="GO:0010951">
    <property type="term" value="P:negative regulation of endopeptidase activity"/>
    <property type="evidence" value="ECO:0000250"/>
    <property type="project" value="UniProtKB"/>
</dbReference>
<dbReference type="GO" id="GO:0007338">
    <property type="term" value="P:single fertilization"/>
    <property type="evidence" value="ECO:0000250"/>
    <property type="project" value="UniProtKB"/>
</dbReference>
<dbReference type="CDD" id="cd00042">
    <property type="entry name" value="CY"/>
    <property type="match status" value="1"/>
</dbReference>
<dbReference type="FunFam" id="3.10.450.10:FF:000005">
    <property type="entry name" value="Histidine-rich glycoprotein"/>
    <property type="match status" value="1"/>
</dbReference>
<dbReference type="Gene3D" id="3.10.450.10">
    <property type="match status" value="2"/>
</dbReference>
<dbReference type="InterPro" id="IPR000010">
    <property type="entry name" value="Cystatin_dom"/>
</dbReference>
<dbReference type="InterPro" id="IPR025764">
    <property type="entry name" value="Cystatin_Fetuin_B"/>
</dbReference>
<dbReference type="InterPro" id="IPR046350">
    <property type="entry name" value="Cystatin_sf"/>
</dbReference>
<dbReference type="InterPro" id="IPR050735">
    <property type="entry name" value="Kininogen_Fetuin_HRG"/>
</dbReference>
<dbReference type="InterPro" id="IPR001363">
    <property type="entry name" value="Prot_inh_fetuin_CS"/>
</dbReference>
<dbReference type="PANTHER" id="PTHR13814">
    <property type="entry name" value="FETUIN"/>
    <property type="match status" value="1"/>
</dbReference>
<dbReference type="PANTHER" id="PTHR13814:SF10">
    <property type="entry name" value="FETUIN-B"/>
    <property type="match status" value="1"/>
</dbReference>
<dbReference type="Pfam" id="PF00031">
    <property type="entry name" value="Cystatin"/>
    <property type="match status" value="1"/>
</dbReference>
<dbReference type="SMART" id="SM00043">
    <property type="entry name" value="CY"/>
    <property type="match status" value="2"/>
</dbReference>
<dbReference type="SUPFAM" id="SSF54403">
    <property type="entry name" value="Cystatin/monellin"/>
    <property type="match status" value="2"/>
</dbReference>
<dbReference type="PROSITE" id="PS51530">
    <property type="entry name" value="CYSTATIN_FETUIN_B"/>
    <property type="match status" value="2"/>
</dbReference>
<dbReference type="PROSITE" id="PS01255">
    <property type="entry name" value="FETUIN_2"/>
    <property type="match status" value="1"/>
</dbReference>
<sequence>MNVLLLLVLCTLAMGCGATSPPQPAARPSSLLSLDCNSSYVLDIANDILQDINRDRKDGYVLSLNRVSDAREHRQEAGLGSLFYFTLDVLETGCHVLSRTSWKNCEVRIFHESVYGQCKAIFYINKEKRIFYLPAYNCTLRPVSQSAIIMTCPDCPSTSPYDLSNPRFMETATESLAKYNSESPSKQYSLVKITKTSSQWVFGPAYFVEYLIKESPCVKSEGSSCALESPGSVPVGICHGSLGEPQGNQGKIISVTCSFFNSQAPTPRGENATVNQRPANPSKTEELQQQNTAPTNSPTKAVPKGSVQYLPDWDKKREGSQEKDPVETFPVQLDLTTNPQGESLDVSFLFQEPMEEKVVVLPFPSKEQRSAECPGPAQKGYPFILPS</sequence>
<gene>
    <name type="primary">FETUB</name>
</gene>
<evidence type="ECO:0000250" key="1"/>
<evidence type="ECO:0000250" key="2">
    <source>
        <dbReference type="UniProtKB" id="Q9UGM5"/>
    </source>
</evidence>
<evidence type="ECO:0000255" key="3"/>
<evidence type="ECO:0000255" key="4">
    <source>
        <dbReference type="PROSITE-ProRule" id="PRU00862"/>
    </source>
</evidence>
<evidence type="ECO:0000256" key="5">
    <source>
        <dbReference type="SAM" id="MobiDB-lite"/>
    </source>
</evidence>
<evidence type="ECO:0000269" key="6">
    <source>
    </source>
</evidence>
<keyword id="KW-1015">Disulfide bond</keyword>
<keyword id="KW-0278">Fertilization</keyword>
<keyword id="KW-0325">Glycoprotein</keyword>
<keyword id="KW-0481">Metalloenzyme inhibitor</keyword>
<keyword id="KW-0483">Metalloprotease inhibitor</keyword>
<keyword id="KW-0597">Phosphoprotein</keyword>
<keyword id="KW-0646">Protease inhibitor</keyword>
<keyword id="KW-1185">Reference proteome</keyword>
<keyword id="KW-0677">Repeat</keyword>
<keyword id="KW-0964">Secreted</keyword>
<keyword id="KW-0732">Signal</keyword>
<comment type="function">
    <text evidence="1">Protease inhibitor required for egg fertilization. Required to prevent premature zona pellucida hardening before fertilization, probably by inhibiting the protease activity of ASTL, a protease that mediates the cleavage of ZP2 and triggers zona pellucida hardening (By similarity).</text>
</comment>
<comment type="subcellular location">
    <subcellularLocation>
        <location evidence="1">Secreted</location>
    </subcellularLocation>
</comment>
<comment type="tissue specificity">
    <text>Liver and testis.</text>
</comment>
<comment type="similarity">
    <text evidence="4">Belongs to the fetuin family.</text>
</comment>